<reference key="1">
    <citation type="journal article" date="1996" name="DNA Res.">
        <title>A 718-kb DNA sequence of the Escherichia coli K-12 genome corresponding to the 12.7-28.0 min region on the linkage map.</title>
        <authorList>
            <person name="Oshima T."/>
            <person name="Aiba H."/>
            <person name="Baba T."/>
            <person name="Fujita K."/>
            <person name="Hayashi K."/>
            <person name="Honjo A."/>
            <person name="Ikemoto K."/>
            <person name="Inada T."/>
            <person name="Itoh T."/>
            <person name="Kajihara M."/>
            <person name="Kanai K."/>
            <person name="Kashimoto K."/>
            <person name="Kimura S."/>
            <person name="Kitagawa M."/>
            <person name="Makino K."/>
            <person name="Masuda S."/>
            <person name="Miki T."/>
            <person name="Mizobuchi K."/>
            <person name="Mori H."/>
            <person name="Motomura K."/>
            <person name="Nakamura Y."/>
            <person name="Nashimoto H."/>
            <person name="Nishio Y."/>
            <person name="Saito N."/>
            <person name="Sampei G."/>
            <person name="Seki Y."/>
            <person name="Tagami H."/>
            <person name="Takemoto K."/>
            <person name="Wada C."/>
            <person name="Yamamoto Y."/>
            <person name="Yano M."/>
            <person name="Horiuchi T."/>
        </authorList>
    </citation>
    <scope>NUCLEOTIDE SEQUENCE [LARGE SCALE GENOMIC DNA]</scope>
    <source>
        <strain>K12 / W3110 / ATCC 27325 / DSM 5911</strain>
    </source>
</reference>
<reference key="2">
    <citation type="journal article" date="1997" name="Science">
        <title>The complete genome sequence of Escherichia coli K-12.</title>
        <authorList>
            <person name="Blattner F.R."/>
            <person name="Plunkett G. III"/>
            <person name="Bloch C.A."/>
            <person name="Perna N.T."/>
            <person name="Burland V."/>
            <person name="Riley M."/>
            <person name="Collado-Vides J."/>
            <person name="Glasner J.D."/>
            <person name="Rode C.K."/>
            <person name="Mayhew G.F."/>
            <person name="Gregor J."/>
            <person name="Davis N.W."/>
            <person name="Kirkpatrick H.A."/>
            <person name="Goeden M.A."/>
            <person name="Rose D.J."/>
            <person name="Mau B."/>
            <person name="Shao Y."/>
        </authorList>
    </citation>
    <scope>NUCLEOTIDE SEQUENCE [LARGE SCALE GENOMIC DNA]</scope>
    <source>
        <strain>K12 / MG1655 / ATCC 47076</strain>
    </source>
</reference>
<reference key="3">
    <citation type="journal article" date="2006" name="Mol. Syst. Biol.">
        <title>Highly accurate genome sequences of Escherichia coli K-12 strains MG1655 and W3110.</title>
        <authorList>
            <person name="Hayashi K."/>
            <person name="Morooka N."/>
            <person name="Yamamoto Y."/>
            <person name="Fujita K."/>
            <person name="Isono K."/>
            <person name="Choi S."/>
            <person name="Ohtsubo E."/>
            <person name="Baba T."/>
            <person name="Wanner B.L."/>
            <person name="Mori H."/>
            <person name="Horiuchi T."/>
        </authorList>
    </citation>
    <scope>NUCLEOTIDE SEQUENCE [LARGE SCALE GENOMIC DNA]</scope>
    <source>
        <strain>K12 / W3110 / ATCC 27325 / DSM 5911</strain>
    </source>
</reference>
<reference key="4">
    <citation type="journal article" date="2011" name="J. Bacteriol.">
        <title>YcdY protein of Escherichia coli, an atypical member of the TorD chaperone family.</title>
        <authorList>
            <person name="Redelberger D."/>
            <person name="Seduk F."/>
            <person name="Genest O."/>
            <person name="Mejean V."/>
            <person name="Leimkuhler S."/>
            <person name="Iobbi-Nivol C."/>
        </authorList>
    </citation>
    <scope>FUNCTION</scope>
    <scope>INTERACTION WITH YCDX</scope>
    <scope>DISRUPTION PHENOTYPE</scope>
    <scope>IDENTIFICATION BY MASS SPECTROMETRY</scope>
    <source>
        <strain>K12 / BW25113</strain>
    </source>
</reference>
<gene>
    <name type="primary">ycdY</name>
    <name type="ordered locus">b1035</name>
    <name type="ordered locus">JW1018</name>
</gene>
<organism>
    <name type="scientific">Escherichia coli (strain K12)</name>
    <dbReference type="NCBI Taxonomy" id="83333"/>
    <lineage>
        <taxon>Bacteria</taxon>
        <taxon>Pseudomonadati</taxon>
        <taxon>Pseudomonadota</taxon>
        <taxon>Gammaproteobacteria</taxon>
        <taxon>Enterobacterales</taxon>
        <taxon>Enterobacteriaceae</taxon>
        <taxon>Escherichia</taxon>
    </lineage>
</organism>
<comment type="function">
    <text evidence="1">Acts as a chaperone that increases YcdX activity, maybe by facilitating the correct insertion of the zinc ions into the catalytic site of YcdX. Involved in the swarming motility process.</text>
</comment>
<comment type="subunit">
    <text evidence="1">Interacts with YcdX.</text>
</comment>
<comment type="interaction">
    <interactant intactId="EBI-1121634">
        <id>P75915</id>
    </interactant>
    <interactant intactId="EBI-1121626">
        <id>P75914</id>
        <label>ycdX</label>
    </interactant>
    <organismsDiffer>false</organismsDiffer>
    <experiments>2</experiments>
</comment>
<comment type="disruption phenotype">
    <text evidence="1">Mutants show no swarming ability.</text>
</comment>
<comment type="miscellaneous">
    <text>Does not bind zinc.</text>
</comment>
<comment type="similarity">
    <text evidence="2">Belongs to the TorD/DmsD family.</text>
</comment>
<dbReference type="EMBL" id="U00096">
    <property type="protein sequence ID" value="AAC74119.1"/>
    <property type="molecule type" value="Genomic_DNA"/>
</dbReference>
<dbReference type="EMBL" id="AP009048">
    <property type="protein sequence ID" value="BAA35816.1"/>
    <property type="molecule type" value="Genomic_DNA"/>
</dbReference>
<dbReference type="PIR" id="H64845">
    <property type="entry name" value="H64845"/>
</dbReference>
<dbReference type="RefSeq" id="NP_415553.1">
    <property type="nucleotide sequence ID" value="NC_000913.3"/>
</dbReference>
<dbReference type="RefSeq" id="WP_001001921.1">
    <property type="nucleotide sequence ID" value="NZ_SSZK01000090.1"/>
</dbReference>
<dbReference type="SMR" id="P75915"/>
<dbReference type="BioGRID" id="4260062">
    <property type="interactions" value="15"/>
</dbReference>
<dbReference type="DIP" id="DIP-11519N"/>
<dbReference type="FunCoup" id="P75915">
    <property type="interactions" value="13"/>
</dbReference>
<dbReference type="IntAct" id="P75915">
    <property type="interactions" value="7"/>
</dbReference>
<dbReference type="STRING" id="511145.b1035"/>
<dbReference type="jPOST" id="P75915"/>
<dbReference type="PaxDb" id="511145-b1035"/>
<dbReference type="EnsemblBacteria" id="AAC74119">
    <property type="protein sequence ID" value="AAC74119"/>
    <property type="gene ID" value="b1035"/>
</dbReference>
<dbReference type="GeneID" id="75203623"/>
<dbReference type="GeneID" id="945609"/>
<dbReference type="KEGG" id="ecj:JW1018"/>
<dbReference type="KEGG" id="eco:b1035"/>
<dbReference type="PATRIC" id="fig|1411691.4.peg.1236"/>
<dbReference type="EchoBASE" id="EB3630"/>
<dbReference type="eggNOG" id="COG3381">
    <property type="taxonomic scope" value="Bacteria"/>
</dbReference>
<dbReference type="HOGENOM" id="CLU_077650_7_2_6"/>
<dbReference type="InParanoid" id="P75915"/>
<dbReference type="OMA" id="DEYLLPW"/>
<dbReference type="OrthoDB" id="5684843at2"/>
<dbReference type="PhylomeDB" id="P75915"/>
<dbReference type="BioCyc" id="EcoCyc:G6541-MONOMER"/>
<dbReference type="PRO" id="PR:P75915"/>
<dbReference type="Proteomes" id="UP000000625">
    <property type="component" value="Chromosome"/>
</dbReference>
<dbReference type="GO" id="GO:0005737">
    <property type="term" value="C:cytoplasm"/>
    <property type="evidence" value="ECO:0000318"/>
    <property type="project" value="GO_Central"/>
</dbReference>
<dbReference type="GO" id="GO:0005829">
    <property type="term" value="C:cytosol"/>
    <property type="evidence" value="ECO:0000314"/>
    <property type="project" value="EcoCyc"/>
</dbReference>
<dbReference type="GO" id="GO:0071978">
    <property type="term" value="P:bacterial-type flagellum-dependent swarming motility"/>
    <property type="evidence" value="ECO:0000315"/>
    <property type="project" value="EcoCyc"/>
</dbReference>
<dbReference type="GO" id="GO:0006974">
    <property type="term" value="P:DNA damage response"/>
    <property type="evidence" value="ECO:0000270"/>
    <property type="project" value="EcoliWiki"/>
</dbReference>
<dbReference type="GO" id="GO:0051604">
    <property type="term" value="P:protein maturation"/>
    <property type="evidence" value="ECO:0000318"/>
    <property type="project" value="GO_Central"/>
</dbReference>
<dbReference type="FunFam" id="1.10.3480.10:FF:000003">
    <property type="entry name" value="Chaperone, TorD family"/>
    <property type="match status" value="1"/>
</dbReference>
<dbReference type="Gene3D" id="1.10.3480.10">
    <property type="entry name" value="TorD-like"/>
    <property type="match status" value="1"/>
</dbReference>
<dbReference type="InterPro" id="IPR026269">
    <property type="entry name" value="DmsD-type"/>
</dbReference>
<dbReference type="InterPro" id="IPR020945">
    <property type="entry name" value="DMSO/NO3_reduct_chaperone"/>
</dbReference>
<dbReference type="InterPro" id="IPR036411">
    <property type="entry name" value="TorD-like_sf"/>
</dbReference>
<dbReference type="InterPro" id="IPR050289">
    <property type="entry name" value="TorD/DmsD_chaperones"/>
</dbReference>
<dbReference type="PANTHER" id="PTHR34227">
    <property type="entry name" value="CHAPERONE PROTEIN YCDY"/>
    <property type="match status" value="1"/>
</dbReference>
<dbReference type="PANTHER" id="PTHR34227:SF12">
    <property type="entry name" value="CHAPERONE PROTEIN YCDY"/>
    <property type="match status" value="1"/>
</dbReference>
<dbReference type="Pfam" id="PF02613">
    <property type="entry name" value="Nitrate_red_del"/>
    <property type="match status" value="1"/>
</dbReference>
<dbReference type="PIRSF" id="PIRSF004690">
    <property type="entry name" value="DmsD"/>
    <property type="match status" value="1"/>
</dbReference>
<dbReference type="SUPFAM" id="SSF89155">
    <property type="entry name" value="TorD-like"/>
    <property type="match status" value="1"/>
</dbReference>
<accession>P75915</accession>
<feature type="chain" id="PRO_0000211657" description="Chaperone protein YcdY">
    <location>
        <begin position="1"/>
        <end position="184"/>
    </location>
</feature>
<proteinExistence type="evidence at protein level"/>
<evidence type="ECO:0000269" key="1">
    <source>
    </source>
</evidence>
<evidence type="ECO:0000305" key="2"/>
<protein>
    <recommendedName>
        <fullName>Chaperone protein YcdY</fullName>
    </recommendedName>
</protein>
<sequence length="184" mass="20724">MNEFSILCRVLGSLYYRQPQDPLLVPLFTLIREGKLAANWPLEQDELLTRLQKSCDMTQVSADYNALFIGDECAVPPYRSAWVEGATEAEVRAFLSERGMPLADTPADHIGTLLLAASWLEDQSTEDESEALETLFSEYLLPWCGAFLGKVEAHATTPFWRTMAPLTRDAISAMWDELEEDSEE</sequence>
<name>YCDY_ECOLI</name>
<keyword id="KW-0143">Chaperone</keyword>
<keyword id="KW-1185">Reference proteome</keyword>